<organism>
    <name type="scientific">Bacillus cereus (strain ATCC 14579 / DSM 31 / CCUG 7414 / JCM 2152 / NBRC 15305 / NCIMB 9373 / NCTC 2599 / NRRL B-3711)</name>
    <dbReference type="NCBI Taxonomy" id="226900"/>
    <lineage>
        <taxon>Bacteria</taxon>
        <taxon>Bacillati</taxon>
        <taxon>Bacillota</taxon>
        <taxon>Bacilli</taxon>
        <taxon>Bacillales</taxon>
        <taxon>Bacillaceae</taxon>
        <taxon>Bacillus</taxon>
        <taxon>Bacillus cereus group</taxon>
    </lineage>
</organism>
<accession>Q817V8</accession>
<sequence length="368" mass="41569">MSILEQVQPIETMLPERYYTMSTEDMEKRVREIKEKMGKMLFIPGHHYQKDEVVQFSDAVGDSLQLAQVAASNKDAKYIVFCGVHFMAETADMLTTDDQVVILPDMRAGCSMADMADIEQTERAWKELTKLFGDTMIPLTYVNSTAAIKAFCGRNGGATVTSSNAKQMVSWAFTQKERLVFLPDQHLGRNTAYDLGIPLDKMAVWDPHTDSLEYDGDIEEIQVILWKGHCSVHQNFTVKNIESVRKNHSDMNIIVHPECCYEVVAASDYAGSTKYIIDMIESAPPGSKWAIGTEMNLVNRIIQQHPDKEIVSLNPFMCPCLTMNRIDLPHLLWALETIERGEEINVISVDKQVTAEAVLALNRMLERV</sequence>
<feature type="chain" id="PRO_1000024986" description="Quinolinate synthase">
    <location>
        <begin position="1"/>
        <end position="368"/>
    </location>
</feature>
<feature type="binding site" evidence="1">
    <location>
        <position position="46"/>
    </location>
    <ligand>
        <name>iminosuccinate</name>
        <dbReference type="ChEBI" id="CHEBI:77875"/>
    </ligand>
</feature>
<feature type="binding site" evidence="1">
    <location>
        <position position="63"/>
    </location>
    <ligand>
        <name>iminosuccinate</name>
        <dbReference type="ChEBI" id="CHEBI:77875"/>
    </ligand>
</feature>
<feature type="binding site" evidence="1">
    <location>
        <position position="110"/>
    </location>
    <ligand>
        <name>[4Fe-4S] cluster</name>
        <dbReference type="ChEBI" id="CHEBI:49883"/>
    </ligand>
</feature>
<feature type="binding site" evidence="1">
    <location>
        <begin position="141"/>
        <end position="143"/>
    </location>
    <ligand>
        <name>iminosuccinate</name>
        <dbReference type="ChEBI" id="CHEBI:77875"/>
    </ligand>
</feature>
<feature type="binding site" evidence="1">
    <location>
        <position position="162"/>
    </location>
    <ligand>
        <name>iminosuccinate</name>
        <dbReference type="ChEBI" id="CHEBI:77875"/>
    </ligand>
</feature>
<feature type="binding site" evidence="1">
    <location>
        <position position="230"/>
    </location>
    <ligand>
        <name>[4Fe-4S] cluster</name>
        <dbReference type="ChEBI" id="CHEBI:49883"/>
    </ligand>
</feature>
<feature type="binding site" evidence="1">
    <location>
        <begin position="256"/>
        <end position="258"/>
    </location>
    <ligand>
        <name>iminosuccinate</name>
        <dbReference type="ChEBI" id="CHEBI:77875"/>
    </ligand>
</feature>
<feature type="binding site" evidence="1">
    <location>
        <position position="273"/>
    </location>
    <ligand>
        <name>iminosuccinate</name>
        <dbReference type="ChEBI" id="CHEBI:77875"/>
    </ligand>
</feature>
<feature type="binding site" evidence="1">
    <location>
        <position position="320"/>
    </location>
    <ligand>
        <name>[4Fe-4S] cluster</name>
        <dbReference type="ChEBI" id="CHEBI:49883"/>
    </ligand>
</feature>
<comment type="function">
    <text evidence="1">Catalyzes the condensation of iminoaspartate with dihydroxyacetone phosphate to form quinolinate.</text>
</comment>
<comment type="catalytic activity">
    <reaction evidence="1">
        <text>iminosuccinate + dihydroxyacetone phosphate = quinolinate + phosphate + 2 H2O + H(+)</text>
        <dbReference type="Rhea" id="RHEA:25888"/>
        <dbReference type="ChEBI" id="CHEBI:15377"/>
        <dbReference type="ChEBI" id="CHEBI:15378"/>
        <dbReference type="ChEBI" id="CHEBI:29959"/>
        <dbReference type="ChEBI" id="CHEBI:43474"/>
        <dbReference type="ChEBI" id="CHEBI:57642"/>
        <dbReference type="ChEBI" id="CHEBI:77875"/>
        <dbReference type="EC" id="2.5.1.72"/>
    </reaction>
    <physiologicalReaction direction="left-to-right" evidence="1">
        <dbReference type="Rhea" id="RHEA:25889"/>
    </physiologicalReaction>
</comment>
<comment type="cofactor">
    <cofactor evidence="1">
        <name>[4Fe-4S] cluster</name>
        <dbReference type="ChEBI" id="CHEBI:49883"/>
    </cofactor>
    <text evidence="1">Binds 1 [4Fe-4S] cluster per subunit.</text>
</comment>
<comment type="pathway">
    <text evidence="1">Cofactor biosynthesis; NAD(+) biosynthesis; quinolinate from iminoaspartate: step 1/1.</text>
</comment>
<comment type="subcellular location">
    <subcellularLocation>
        <location evidence="1">Cytoplasm</location>
    </subcellularLocation>
</comment>
<comment type="similarity">
    <text evidence="1">Belongs to the quinolinate synthase family. Type 3 subfamily.</text>
</comment>
<proteinExistence type="inferred from homology"/>
<evidence type="ECO:0000255" key="1">
    <source>
        <dbReference type="HAMAP-Rule" id="MF_00569"/>
    </source>
</evidence>
<name>NADA_BACCR</name>
<dbReference type="EC" id="2.5.1.72" evidence="1"/>
<dbReference type="EMBL" id="AE016877">
    <property type="protein sequence ID" value="AAP11334.1"/>
    <property type="molecule type" value="Genomic_DNA"/>
</dbReference>
<dbReference type="RefSeq" id="NP_834133.1">
    <property type="nucleotide sequence ID" value="NC_004722.1"/>
</dbReference>
<dbReference type="RefSeq" id="WP_000025341.1">
    <property type="nucleotide sequence ID" value="NC_004722.1"/>
</dbReference>
<dbReference type="SMR" id="Q817V8"/>
<dbReference type="STRING" id="226900.BC_4421"/>
<dbReference type="MetOSite" id="Q817V8"/>
<dbReference type="KEGG" id="bce:BC4421"/>
<dbReference type="PATRIC" id="fig|226900.8.peg.4572"/>
<dbReference type="HOGENOM" id="CLU_047382_2_0_9"/>
<dbReference type="OrthoDB" id="9801204at2"/>
<dbReference type="UniPathway" id="UPA00253">
    <property type="reaction ID" value="UER00327"/>
</dbReference>
<dbReference type="Proteomes" id="UP000001417">
    <property type="component" value="Chromosome"/>
</dbReference>
<dbReference type="GO" id="GO:0005829">
    <property type="term" value="C:cytosol"/>
    <property type="evidence" value="ECO:0000318"/>
    <property type="project" value="GO_Central"/>
</dbReference>
<dbReference type="GO" id="GO:0051539">
    <property type="term" value="F:4 iron, 4 sulfur cluster binding"/>
    <property type="evidence" value="ECO:0000318"/>
    <property type="project" value="GO_Central"/>
</dbReference>
<dbReference type="GO" id="GO:0046872">
    <property type="term" value="F:metal ion binding"/>
    <property type="evidence" value="ECO:0007669"/>
    <property type="project" value="UniProtKB-KW"/>
</dbReference>
<dbReference type="GO" id="GO:0008987">
    <property type="term" value="F:quinolinate synthetase A activity"/>
    <property type="evidence" value="ECO:0000318"/>
    <property type="project" value="GO_Central"/>
</dbReference>
<dbReference type="GO" id="GO:0034628">
    <property type="term" value="P:'de novo' NAD biosynthetic process from L-aspartate"/>
    <property type="evidence" value="ECO:0000318"/>
    <property type="project" value="GO_Central"/>
</dbReference>
<dbReference type="FunFam" id="3.40.50.10800:FF:000001">
    <property type="entry name" value="Quinolinate synthase A"/>
    <property type="match status" value="1"/>
</dbReference>
<dbReference type="Gene3D" id="3.40.50.10800">
    <property type="entry name" value="NadA-like"/>
    <property type="match status" value="3"/>
</dbReference>
<dbReference type="HAMAP" id="MF_00569">
    <property type="entry name" value="NadA_type3"/>
    <property type="match status" value="1"/>
</dbReference>
<dbReference type="InterPro" id="IPR003473">
    <property type="entry name" value="NadA"/>
</dbReference>
<dbReference type="InterPro" id="IPR036094">
    <property type="entry name" value="NadA_sf"/>
</dbReference>
<dbReference type="InterPro" id="IPR023515">
    <property type="entry name" value="Quinolinate_synth_A_type3"/>
</dbReference>
<dbReference type="NCBIfam" id="TIGR00550">
    <property type="entry name" value="nadA"/>
    <property type="match status" value="1"/>
</dbReference>
<dbReference type="NCBIfam" id="NF006880">
    <property type="entry name" value="PRK09375.2-1"/>
    <property type="match status" value="1"/>
</dbReference>
<dbReference type="NCBIfam" id="NF006883">
    <property type="entry name" value="PRK09375.2-4"/>
    <property type="match status" value="1"/>
</dbReference>
<dbReference type="PANTHER" id="PTHR30573:SF0">
    <property type="entry name" value="QUINOLINATE SYNTHASE, CHLOROPLASTIC"/>
    <property type="match status" value="1"/>
</dbReference>
<dbReference type="PANTHER" id="PTHR30573">
    <property type="entry name" value="QUINOLINATE SYNTHETASE A"/>
    <property type="match status" value="1"/>
</dbReference>
<dbReference type="Pfam" id="PF02445">
    <property type="entry name" value="NadA"/>
    <property type="match status" value="1"/>
</dbReference>
<dbReference type="SUPFAM" id="SSF142754">
    <property type="entry name" value="NadA-like"/>
    <property type="match status" value="1"/>
</dbReference>
<protein>
    <recommendedName>
        <fullName evidence="1">Quinolinate synthase</fullName>
        <ecNumber evidence="1">2.5.1.72</ecNumber>
    </recommendedName>
</protein>
<keyword id="KW-0004">4Fe-4S</keyword>
<keyword id="KW-0963">Cytoplasm</keyword>
<keyword id="KW-0408">Iron</keyword>
<keyword id="KW-0411">Iron-sulfur</keyword>
<keyword id="KW-0479">Metal-binding</keyword>
<keyword id="KW-0662">Pyridine nucleotide biosynthesis</keyword>
<keyword id="KW-1185">Reference proteome</keyword>
<keyword id="KW-0808">Transferase</keyword>
<reference key="1">
    <citation type="journal article" date="2003" name="Nature">
        <title>Genome sequence of Bacillus cereus and comparative analysis with Bacillus anthracis.</title>
        <authorList>
            <person name="Ivanova N."/>
            <person name="Sorokin A."/>
            <person name="Anderson I."/>
            <person name="Galleron N."/>
            <person name="Candelon B."/>
            <person name="Kapatral V."/>
            <person name="Bhattacharyya A."/>
            <person name="Reznik G."/>
            <person name="Mikhailova N."/>
            <person name="Lapidus A."/>
            <person name="Chu L."/>
            <person name="Mazur M."/>
            <person name="Goltsman E."/>
            <person name="Larsen N."/>
            <person name="D'Souza M."/>
            <person name="Walunas T."/>
            <person name="Grechkin Y."/>
            <person name="Pusch G."/>
            <person name="Haselkorn R."/>
            <person name="Fonstein M."/>
            <person name="Ehrlich S.D."/>
            <person name="Overbeek R."/>
            <person name="Kyrpides N.C."/>
        </authorList>
    </citation>
    <scope>NUCLEOTIDE SEQUENCE [LARGE SCALE GENOMIC DNA]</scope>
    <source>
        <strain>ATCC 14579 / DSM 31 / CCUG 7414 / JCM 2152 / NBRC 15305 / NCIMB 9373 / NCTC 2599 / NRRL B-3711</strain>
    </source>
</reference>
<gene>
    <name evidence="1" type="primary">nadA</name>
    <name type="ordered locus">BC_4421</name>
</gene>